<gene>
    <name type="ORF">SPAC212.02</name>
</gene>
<name>YM02_SCHPO</name>
<sequence>MTALMNHIYIDNPLISNSTNNVTHELLIDLHELYNDGEISRIVLLRTLVTQSADDATWIINLTDDVLNGLPLLKKRDRYTTQCHSTNMASTYDCDTGANAVGARGGATLAADYRGDWGGGVMLYKPLVVKACLTEI</sequence>
<comment type="subcellular location">
    <subcellularLocation>
        <location evidence="1">Cytoplasm</location>
    </subcellularLocation>
    <subcellularLocation>
        <location evidence="1">Nucleus</location>
    </subcellularLocation>
</comment>
<keyword id="KW-0963">Cytoplasm</keyword>
<keyword id="KW-0539">Nucleus</keyword>
<keyword id="KW-1185">Reference proteome</keyword>
<dbReference type="EMBL" id="CU329670">
    <property type="protein sequence ID" value="CAC05736.1"/>
    <property type="molecule type" value="Genomic_DNA"/>
</dbReference>
<dbReference type="RefSeq" id="NP_595036.1">
    <property type="nucleotide sequence ID" value="NM_001018172.1"/>
</dbReference>
<dbReference type="BioGRID" id="278529">
    <property type="interactions" value="17"/>
</dbReference>
<dbReference type="STRING" id="284812.Q9HGQ0"/>
<dbReference type="PaxDb" id="4896-SPAC212.02.1"/>
<dbReference type="EnsemblFungi" id="SPAC212.02.1">
    <property type="protein sequence ID" value="SPAC212.02.1:pep"/>
    <property type="gene ID" value="SPAC212.02"/>
</dbReference>
<dbReference type="KEGG" id="spo:2542050"/>
<dbReference type="PomBase" id="SPAC212.02"/>
<dbReference type="VEuPathDB" id="FungiDB:SPAC212.02"/>
<dbReference type="HOGENOM" id="CLU_2062827_0_0_1"/>
<dbReference type="InParanoid" id="Q9HGQ0"/>
<dbReference type="PRO" id="PR:Q9HGQ0"/>
<dbReference type="Proteomes" id="UP000002485">
    <property type="component" value="Chromosome I"/>
</dbReference>
<dbReference type="GO" id="GO:0005829">
    <property type="term" value="C:cytosol"/>
    <property type="evidence" value="ECO:0007005"/>
    <property type="project" value="PomBase"/>
</dbReference>
<dbReference type="GO" id="GO:0005634">
    <property type="term" value="C:nucleus"/>
    <property type="evidence" value="ECO:0007005"/>
    <property type="project" value="PomBase"/>
</dbReference>
<proteinExistence type="predicted"/>
<protein>
    <recommendedName>
        <fullName>Uncharacterized protein C212.02</fullName>
    </recommendedName>
</protein>
<accession>Q9HGQ0</accession>
<reference key="1">
    <citation type="journal article" date="2002" name="Nature">
        <title>The genome sequence of Schizosaccharomyces pombe.</title>
        <authorList>
            <person name="Wood V."/>
            <person name="Gwilliam R."/>
            <person name="Rajandream M.A."/>
            <person name="Lyne M.H."/>
            <person name="Lyne R."/>
            <person name="Stewart A."/>
            <person name="Sgouros J.G."/>
            <person name="Peat N."/>
            <person name="Hayles J."/>
            <person name="Baker S.G."/>
            <person name="Basham D."/>
            <person name="Bowman S."/>
            <person name="Brooks K."/>
            <person name="Brown D."/>
            <person name="Brown S."/>
            <person name="Chillingworth T."/>
            <person name="Churcher C.M."/>
            <person name="Collins M."/>
            <person name="Connor R."/>
            <person name="Cronin A."/>
            <person name="Davis P."/>
            <person name="Feltwell T."/>
            <person name="Fraser A."/>
            <person name="Gentles S."/>
            <person name="Goble A."/>
            <person name="Hamlin N."/>
            <person name="Harris D.E."/>
            <person name="Hidalgo J."/>
            <person name="Hodgson G."/>
            <person name="Holroyd S."/>
            <person name="Hornsby T."/>
            <person name="Howarth S."/>
            <person name="Huckle E.J."/>
            <person name="Hunt S."/>
            <person name="Jagels K."/>
            <person name="James K.D."/>
            <person name="Jones L."/>
            <person name="Jones M."/>
            <person name="Leather S."/>
            <person name="McDonald S."/>
            <person name="McLean J."/>
            <person name="Mooney P."/>
            <person name="Moule S."/>
            <person name="Mungall K.L."/>
            <person name="Murphy L.D."/>
            <person name="Niblett D."/>
            <person name="Odell C."/>
            <person name="Oliver K."/>
            <person name="O'Neil S."/>
            <person name="Pearson D."/>
            <person name="Quail M.A."/>
            <person name="Rabbinowitsch E."/>
            <person name="Rutherford K.M."/>
            <person name="Rutter S."/>
            <person name="Saunders D."/>
            <person name="Seeger K."/>
            <person name="Sharp S."/>
            <person name="Skelton J."/>
            <person name="Simmonds M.N."/>
            <person name="Squares R."/>
            <person name="Squares S."/>
            <person name="Stevens K."/>
            <person name="Taylor K."/>
            <person name="Taylor R.G."/>
            <person name="Tivey A."/>
            <person name="Walsh S.V."/>
            <person name="Warren T."/>
            <person name="Whitehead S."/>
            <person name="Woodward J.R."/>
            <person name="Volckaert G."/>
            <person name="Aert R."/>
            <person name="Robben J."/>
            <person name="Grymonprez B."/>
            <person name="Weltjens I."/>
            <person name="Vanstreels E."/>
            <person name="Rieger M."/>
            <person name="Schaefer M."/>
            <person name="Mueller-Auer S."/>
            <person name="Gabel C."/>
            <person name="Fuchs M."/>
            <person name="Duesterhoeft A."/>
            <person name="Fritzc C."/>
            <person name="Holzer E."/>
            <person name="Moestl D."/>
            <person name="Hilbert H."/>
            <person name="Borzym K."/>
            <person name="Langer I."/>
            <person name="Beck A."/>
            <person name="Lehrach H."/>
            <person name="Reinhardt R."/>
            <person name="Pohl T.M."/>
            <person name="Eger P."/>
            <person name="Zimmermann W."/>
            <person name="Wedler H."/>
            <person name="Wambutt R."/>
            <person name="Purnelle B."/>
            <person name="Goffeau A."/>
            <person name="Cadieu E."/>
            <person name="Dreano S."/>
            <person name="Gloux S."/>
            <person name="Lelaure V."/>
            <person name="Mottier S."/>
            <person name="Galibert F."/>
            <person name="Aves S.J."/>
            <person name="Xiang Z."/>
            <person name="Hunt C."/>
            <person name="Moore K."/>
            <person name="Hurst S.M."/>
            <person name="Lucas M."/>
            <person name="Rochet M."/>
            <person name="Gaillardin C."/>
            <person name="Tallada V.A."/>
            <person name="Garzon A."/>
            <person name="Thode G."/>
            <person name="Daga R.R."/>
            <person name="Cruzado L."/>
            <person name="Jimenez J."/>
            <person name="Sanchez M."/>
            <person name="del Rey F."/>
            <person name="Benito J."/>
            <person name="Dominguez A."/>
            <person name="Revuelta J.L."/>
            <person name="Moreno S."/>
            <person name="Armstrong J."/>
            <person name="Forsburg S.L."/>
            <person name="Cerutti L."/>
            <person name="Lowe T."/>
            <person name="McCombie W.R."/>
            <person name="Paulsen I."/>
            <person name="Potashkin J."/>
            <person name="Shpakovski G.V."/>
            <person name="Ussery D."/>
            <person name="Barrell B.G."/>
            <person name="Nurse P."/>
        </authorList>
    </citation>
    <scope>NUCLEOTIDE SEQUENCE [LARGE SCALE GENOMIC DNA]</scope>
    <source>
        <strain>972 / ATCC 24843</strain>
    </source>
</reference>
<reference key="2">
    <citation type="journal article" date="2006" name="Nat. Biotechnol.">
        <title>ORFeome cloning and global analysis of protein localization in the fission yeast Schizosaccharomyces pombe.</title>
        <authorList>
            <person name="Matsuyama A."/>
            <person name="Arai R."/>
            <person name="Yashiroda Y."/>
            <person name="Shirai A."/>
            <person name="Kamata A."/>
            <person name="Sekido S."/>
            <person name="Kobayashi Y."/>
            <person name="Hashimoto A."/>
            <person name="Hamamoto M."/>
            <person name="Hiraoka Y."/>
            <person name="Horinouchi S."/>
            <person name="Yoshida M."/>
        </authorList>
    </citation>
    <scope>SUBCELLULAR LOCATION [LARGE SCALE ANALYSIS]</scope>
</reference>
<evidence type="ECO:0000269" key="1">
    <source>
    </source>
</evidence>
<feature type="chain" id="PRO_0000304107" description="Uncharacterized protein C212.02">
    <location>
        <begin position="1"/>
        <end position="136"/>
    </location>
</feature>
<organism>
    <name type="scientific">Schizosaccharomyces pombe (strain 972 / ATCC 24843)</name>
    <name type="common">Fission yeast</name>
    <dbReference type="NCBI Taxonomy" id="284812"/>
    <lineage>
        <taxon>Eukaryota</taxon>
        <taxon>Fungi</taxon>
        <taxon>Dikarya</taxon>
        <taxon>Ascomycota</taxon>
        <taxon>Taphrinomycotina</taxon>
        <taxon>Schizosaccharomycetes</taxon>
        <taxon>Schizosaccharomycetales</taxon>
        <taxon>Schizosaccharomycetaceae</taxon>
        <taxon>Schizosaccharomyces</taxon>
    </lineage>
</organism>